<proteinExistence type="evidence at transcript level"/>
<comment type="function">
    <text evidence="2">This is a key enzyme of plant metabolism catalyzing the first reaction in the biosynthesis from L-phenylalanine of a wide variety of natural products based on the phenylpropane skeleton.</text>
</comment>
<comment type="catalytic activity">
    <reaction evidence="4 5">
        <text>L-phenylalanine = (E)-cinnamate + NH4(+)</text>
        <dbReference type="Rhea" id="RHEA:21384"/>
        <dbReference type="ChEBI" id="CHEBI:15669"/>
        <dbReference type="ChEBI" id="CHEBI:28938"/>
        <dbReference type="ChEBI" id="CHEBI:58095"/>
        <dbReference type="EC" id="4.3.1.24"/>
    </reaction>
</comment>
<comment type="pathway">
    <text evidence="7">Alkaloid biosynthesis.</text>
</comment>
<comment type="pathway">
    <text evidence="4">Phenylpropanoid metabolism; trans-cinnamate biosynthesis; trans-cinnamate from L-phenylalanine: step 1/1.</text>
</comment>
<comment type="subunit">
    <text evidence="4">Homotetramer.</text>
</comment>
<comment type="subcellular location">
    <subcellularLocation>
        <location evidence="1">Cytoplasm</location>
    </subcellularLocation>
</comment>
<comment type="tissue specificity">
    <text evidence="6">Mostly expressed in stems, and, to a lower extent, in bulbs, roots, leaves and flowers.</text>
</comment>
<comment type="PTM">
    <text evidence="3">Contains an active site 4-methylidene-imidazol-5-one (MIO), which is formed autocatalytically by cyclization and dehydration of residues Ala-Ser-Gly.</text>
</comment>
<comment type="similarity">
    <text evidence="8">Belongs to the PAL/histidase family.</text>
</comment>
<feature type="chain" id="PRO_0000450631" description="Phenylalanine ammonia-lyase 1">
    <location>
        <begin position="1"/>
        <end position="708"/>
    </location>
</feature>
<feature type="active site" description="Proton donor/acceptor" evidence="3">
    <location>
        <position position="100"/>
    </location>
</feature>
<feature type="binding site" evidence="3">
    <location>
        <position position="252"/>
    </location>
    <ligand>
        <name>(E)-cinnamate</name>
        <dbReference type="ChEBI" id="CHEBI:15669"/>
    </ligand>
</feature>
<feature type="binding site" evidence="3">
    <location>
        <position position="340"/>
    </location>
    <ligand>
        <name>(E)-cinnamate</name>
        <dbReference type="ChEBI" id="CHEBI:15669"/>
    </ligand>
</feature>
<feature type="binding site" evidence="3">
    <location>
        <position position="346"/>
    </location>
    <ligand>
        <name>(E)-cinnamate</name>
        <dbReference type="ChEBI" id="CHEBI:15669"/>
    </ligand>
</feature>
<feature type="binding site" evidence="3">
    <location>
        <position position="376"/>
    </location>
    <ligand>
        <name>(E)-cinnamate</name>
        <dbReference type="ChEBI" id="CHEBI:15669"/>
    </ligand>
</feature>
<feature type="binding site" evidence="1">
    <location>
        <position position="448"/>
    </location>
    <ligand>
        <name>(E)-cinnamate</name>
        <dbReference type="ChEBI" id="CHEBI:15669"/>
    </ligand>
</feature>
<feature type="binding site" evidence="1">
    <location>
        <position position="476"/>
    </location>
    <ligand>
        <name>(E)-cinnamate</name>
        <dbReference type="ChEBI" id="CHEBI:15669"/>
    </ligand>
</feature>
<feature type="binding site" evidence="3">
    <location>
        <position position="479"/>
    </location>
    <ligand>
        <name>(E)-cinnamate</name>
        <dbReference type="ChEBI" id="CHEBI:15669"/>
    </ligand>
</feature>
<feature type="modified residue" description="2,3-didehydroalanine (Ser)" evidence="3 5">
    <location>
        <position position="195"/>
    </location>
</feature>
<feature type="cross-link" description="5-imidazolinone (Ala-Gly)" evidence="3">
    <location>
        <begin position="194"/>
        <end position="196"/>
    </location>
</feature>
<accession>A0A2H5AIW0</accession>
<sequence>MACANGNGNANGLCIRDPLSWGAAAEALAGSHLEEVKRMVKEHREACIRLGGATLKVGQIAAVANGGSAAKVELDESARARVKASSDWVMDSMSKGTDSYGVTTGFGATSHRRTKQGGALQKELIRFLNAGIFGSGRDSCNTLPASTTRAAMLVRINTLLQGYSGIRFEILEAITRLLNNNVTPCLPLRGTITASGDLVPLSYIAGILTGRPNSKATAPDGAQIDASEAFRLAGITDGFFQLQPKEGLALVNGTAVGSGLASTVLYDANILAVLSEVFSAIFCEVMQGKPEFTDHLTHKLKHHPGQIEAAAVMEHILDGSSYMKMAKKLHELDPLQKPKQDRYALRTSPQWLGPQIEVIRSATKSIEREINSVNDNPLIDVSRNKALHGGNFQGTPIGVSMDNTRLAIASIGKLMFAQFSELVNDFYNNGLPSNLSGGRDPSLDYGFKGAEIAMASYCSELQFLANPVTNHVQSAEQHNQDVNSLGLISARKTEEAVHILKLMSTTFLVGLCQAIDLRHLEENLKSTVKTTISQVAKRVLTSGINGELHPSRFCEKDLIKVVDREHVFSYVDDPCSATYPLMQRLRQILVEHAMNNGEKEKDADTSIFRKISAFEDELKVVLPKEVESARVAYENGTSAIKNRIEECRSYPLYRFVREETGTSLLTGENVRSPGEEFDKVFNAICEGRLVDPLLECLEDWNGAPLPIC</sequence>
<protein>
    <recommendedName>
        <fullName evidence="7">Phenylalanine ammonia-lyase 1</fullName>
        <ecNumber evidence="4 5">4.3.1.24</ecNumber>
    </recommendedName>
</protein>
<keyword id="KW-0017">Alkaloid metabolism</keyword>
<keyword id="KW-0963">Cytoplasm</keyword>
<keyword id="KW-0456">Lyase</keyword>
<keyword id="KW-0585">Phenylalanine catabolism</keyword>
<keyword id="KW-0587">Phenylpropanoid metabolism</keyword>
<gene>
    <name evidence="7" type="primary">PAL1</name>
</gene>
<dbReference type="EC" id="4.3.1.24" evidence="4 5"/>
<dbReference type="EMBL" id="MF405173">
    <property type="protein sequence ID" value="AUG71934.1"/>
    <property type="molecule type" value="mRNA"/>
</dbReference>
<dbReference type="SMR" id="A0A2H5AIW0"/>
<dbReference type="UniPathway" id="UPA00713">
    <property type="reaction ID" value="UER00725"/>
</dbReference>
<dbReference type="GO" id="GO:0005737">
    <property type="term" value="C:cytoplasm"/>
    <property type="evidence" value="ECO:0007669"/>
    <property type="project" value="UniProtKB-SubCell"/>
</dbReference>
<dbReference type="GO" id="GO:0045548">
    <property type="term" value="F:phenylalanine ammonia-lyase activity"/>
    <property type="evidence" value="ECO:0007669"/>
    <property type="project" value="UniProtKB-EC"/>
</dbReference>
<dbReference type="GO" id="GO:0009820">
    <property type="term" value="P:alkaloid metabolic process"/>
    <property type="evidence" value="ECO:0007669"/>
    <property type="project" value="UniProtKB-KW"/>
</dbReference>
<dbReference type="GO" id="GO:0009800">
    <property type="term" value="P:cinnamic acid biosynthetic process"/>
    <property type="evidence" value="ECO:0007669"/>
    <property type="project" value="UniProtKB-UniPathway"/>
</dbReference>
<dbReference type="GO" id="GO:0006559">
    <property type="term" value="P:L-phenylalanine catabolic process"/>
    <property type="evidence" value="ECO:0007669"/>
    <property type="project" value="UniProtKB-KW"/>
</dbReference>
<dbReference type="CDD" id="cd00332">
    <property type="entry name" value="PAL-HAL"/>
    <property type="match status" value="1"/>
</dbReference>
<dbReference type="FunFam" id="1.10.274.20:FF:000001">
    <property type="entry name" value="Phenylalanine ammonia-lyase"/>
    <property type="match status" value="1"/>
</dbReference>
<dbReference type="FunFam" id="1.10.275.10:FF:000009">
    <property type="entry name" value="Phenylalanine ammonia-lyase"/>
    <property type="match status" value="1"/>
</dbReference>
<dbReference type="FunFam" id="1.20.200.10:FF:000009">
    <property type="entry name" value="Phenylalanine ammonia-lyase"/>
    <property type="match status" value="1"/>
</dbReference>
<dbReference type="Gene3D" id="1.20.200.10">
    <property type="entry name" value="Fumarase/aspartase (Central domain)"/>
    <property type="match status" value="1"/>
</dbReference>
<dbReference type="Gene3D" id="1.10.275.10">
    <property type="entry name" value="Fumarase/aspartase (N-terminal domain)"/>
    <property type="match status" value="1"/>
</dbReference>
<dbReference type="Gene3D" id="1.10.274.20">
    <property type="entry name" value="Phenylalanine ammonia-lyase 1, domain 3"/>
    <property type="match status" value="1"/>
</dbReference>
<dbReference type="InterPro" id="IPR001106">
    <property type="entry name" value="Aromatic_Lyase"/>
</dbReference>
<dbReference type="InterPro" id="IPR024083">
    <property type="entry name" value="Fumarase/histidase_N"/>
</dbReference>
<dbReference type="InterPro" id="IPR008948">
    <property type="entry name" value="L-Aspartase-like"/>
</dbReference>
<dbReference type="InterPro" id="IPR022313">
    <property type="entry name" value="Phe/His_NH3-lyase_AS"/>
</dbReference>
<dbReference type="InterPro" id="IPR005922">
    <property type="entry name" value="Phe_NH3-lyase"/>
</dbReference>
<dbReference type="InterPro" id="IPR023144">
    <property type="entry name" value="Phe_NH3-lyase_shielding_dom_sf"/>
</dbReference>
<dbReference type="NCBIfam" id="TIGR01226">
    <property type="entry name" value="phe_am_lyase"/>
    <property type="match status" value="1"/>
</dbReference>
<dbReference type="PANTHER" id="PTHR10362">
    <property type="entry name" value="HISTIDINE AMMONIA-LYASE"/>
    <property type="match status" value="1"/>
</dbReference>
<dbReference type="Pfam" id="PF00221">
    <property type="entry name" value="Lyase_aromatic"/>
    <property type="match status" value="1"/>
</dbReference>
<dbReference type="SUPFAM" id="SSF48557">
    <property type="entry name" value="L-aspartase-like"/>
    <property type="match status" value="1"/>
</dbReference>
<dbReference type="PROSITE" id="PS00488">
    <property type="entry name" value="PAL_HISTIDASE"/>
    <property type="match status" value="1"/>
</dbReference>
<reference key="1">
    <citation type="journal article" date="2017" name="Sci. Rep.">
        <title>Transcriptome and metabolome profiling of Narcissus pseudonarcissus 'King Alfred' reveal components of Amaryllidaceae alkaloid metabolism.</title>
        <authorList>
            <person name="Singh A."/>
            <person name="Desgagne-Penix I."/>
        </authorList>
    </citation>
    <scope>NUCLEOTIDE SEQUENCE [MRNA]</scope>
    <scope>REVIEW ON THE AMARYLLIDACEAE ALKALOID METABOLISM</scope>
    <scope>PATHWAY</scope>
    <scope>TISSUE SPECIFICITY</scope>
    <scope>GENE FAMILY</scope>
    <scope>NOMENCLATURE</scope>
    <source>
        <strain>cv. King Alfred</strain>
        <tissue>Bulb</tissue>
    </source>
</reference>
<evidence type="ECO:0000250" key="1">
    <source>
        <dbReference type="UniProtKB" id="P11544"/>
    </source>
</evidence>
<evidence type="ECO:0000250" key="2">
    <source>
        <dbReference type="UniProtKB" id="P24481"/>
    </source>
</evidence>
<evidence type="ECO:0000250" key="3">
    <source>
        <dbReference type="UniProtKB" id="Q68G84"/>
    </source>
</evidence>
<evidence type="ECO:0000250" key="4">
    <source>
        <dbReference type="UniProtKB" id="Q6GZ04"/>
    </source>
</evidence>
<evidence type="ECO:0000255" key="5">
    <source>
        <dbReference type="PROSITE-ProRule" id="PRU10122"/>
    </source>
</evidence>
<evidence type="ECO:0000269" key="6">
    <source>
    </source>
</evidence>
<evidence type="ECO:0000303" key="7">
    <source>
    </source>
</evidence>
<evidence type="ECO:0000305" key="8"/>
<name>PAL1_NARPS</name>
<organism>
    <name type="scientific">Narcissus pseudonarcissus</name>
    <name type="common">Daffodil</name>
    <dbReference type="NCBI Taxonomy" id="39639"/>
    <lineage>
        <taxon>Eukaryota</taxon>
        <taxon>Viridiplantae</taxon>
        <taxon>Streptophyta</taxon>
        <taxon>Embryophyta</taxon>
        <taxon>Tracheophyta</taxon>
        <taxon>Spermatophyta</taxon>
        <taxon>Magnoliopsida</taxon>
        <taxon>Liliopsida</taxon>
        <taxon>Asparagales</taxon>
        <taxon>Amaryllidaceae</taxon>
        <taxon>Amaryllidoideae</taxon>
        <taxon>Narcissus</taxon>
    </lineage>
</organism>